<gene>
    <name evidence="1" type="primary">ruvB</name>
    <name type="ordered locus">LAR_0514</name>
</gene>
<reference key="1">
    <citation type="journal article" date="2008" name="DNA Res.">
        <title>Comparative genome analysis of Lactobacillus reuteri and Lactobacillus fermentum reveal a genomic island for reuterin and cobalamin production.</title>
        <authorList>
            <person name="Morita H."/>
            <person name="Toh H."/>
            <person name="Fukuda S."/>
            <person name="Horikawa H."/>
            <person name="Oshima K."/>
            <person name="Suzuki T."/>
            <person name="Murakami M."/>
            <person name="Hisamatsu S."/>
            <person name="Kato Y."/>
            <person name="Takizawa T."/>
            <person name="Fukuoka H."/>
            <person name="Yoshimura T."/>
            <person name="Itoh K."/>
            <person name="O'Sullivan D.J."/>
            <person name="McKay L.L."/>
            <person name="Ohno H."/>
            <person name="Kikuchi J."/>
            <person name="Masaoka T."/>
            <person name="Hattori M."/>
        </authorList>
    </citation>
    <scope>NUCLEOTIDE SEQUENCE [LARGE SCALE GENOMIC DNA]</scope>
    <source>
        <strain>JCM 1112</strain>
    </source>
</reference>
<comment type="function">
    <text evidence="1">The RuvA-RuvB-RuvC complex processes Holliday junction (HJ) DNA during genetic recombination and DNA repair, while the RuvA-RuvB complex plays an important role in the rescue of blocked DNA replication forks via replication fork reversal (RFR). RuvA specifically binds to HJ cruciform DNA, conferring on it an open structure. The RuvB hexamer acts as an ATP-dependent pump, pulling dsDNA into and through the RuvAB complex. RuvB forms 2 homohexamers on either side of HJ DNA bound by 1 or 2 RuvA tetramers; 4 subunits per hexamer contact DNA at a time. Coordinated motions by a converter formed by DNA-disengaged RuvB subunits stimulates ATP hydrolysis and nucleotide exchange. Immobilization of the converter enables RuvB to convert the ATP-contained energy into a lever motion, pulling 2 nucleotides of DNA out of the RuvA tetramer per ATP hydrolyzed, thus driving DNA branch migration. The RuvB motors rotate together with the DNA substrate, which together with the progressing nucleotide cycle form the mechanistic basis for DNA recombination by continuous HJ branch migration. Branch migration allows RuvC to scan DNA until it finds its consensus sequence, where it cleaves and resolves cruciform DNA.</text>
</comment>
<comment type="catalytic activity">
    <reaction evidence="1">
        <text>ATP + H2O = ADP + phosphate + H(+)</text>
        <dbReference type="Rhea" id="RHEA:13065"/>
        <dbReference type="ChEBI" id="CHEBI:15377"/>
        <dbReference type="ChEBI" id="CHEBI:15378"/>
        <dbReference type="ChEBI" id="CHEBI:30616"/>
        <dbReference type="ChEBI" id="CHEBI:43474"/>
        <dbReference type="ChEBI" id="CHEBI:456216"/>
    </reaction>
</comment>
<comment type="subunit">
    <text evidence="1">Homohexamer. Forms an RuvA(8)-RuvB(12)-Holliday junction (HJ) complex. HJ DNA is sandwiched between 2 RuvA tetramers; dsDNA enters through RuvA and exits via RuvB. An RuvB hexamer assembles on each DNA strand where it exits the tetramer. Each RuvB hexamer is contacted by two RuvA subunits (via domain III) on 2 adjacent RuvB subunits; this complex drives branch migration. In the full resolvosome a probable DNA-RuvA(4)-RuvB(12)-RuvC(2) complex forms which resolves the HJ.</text>
</comment>
<comment type="subcellular location">
    <subcellularLocation>
        <location evidence="1">Cytoplasm</location>
    </subcellularLocation>
</comment>
<comment type="domain">
    <text evidence="1">Has 3 domains, the large (RuvB-L) and small ATPase (RuvB-S) domains and the C-terminal head (RuvB-H) domain. The head domain binds DNA, while the ATPase domains jointly bind ATP, ADP or are empty depending on the state of the subunit in the translocation cycle. During a single DNA translocation step the structure of each domain remains the same, but their relative positions change.</text>
</comment>
<comment type="similarity">
    <text evidence="1">Belongs to the RuvB family.</text>
</comment>
<protein>
    <recommendedName>
        <fullName evidence="1">Holliday junction branch migration complex subunit RuvB</fullName>
        <ecNumber evidence="1">3.6.4.-</ecNumber>
    </recommendedName>
</protein>
<keyword id="KW-0067">ATP-binding</keyword>
<keyword id="KW-0963">Cytoplasm</keyword>
<keyword id="KW-0227">DNA damage</keyword>
<keyword id="KW-0233">DNA recombination</keyword>
<keyword id="KW-0234">DNA repair</keyword>
<keyword id="KW-0238">DNA-binding</keyword>
<keyword id="KW-0378">Hydrolase</keyword>
<keyword id="KW-0547">Nucleotide-binding</keyword>
<dbReference type="EC" id="3.6.4.-" evidence="1"/>
<dbReference type="EMBL" id="AP007281">
    <property type="protein sequence ID" value="BAG25030.1"/>
    <property type="molecule type" value="Genomic_DNA"/>
</dbReference>
<dbReference type="RefSeq" id="WP_003667627.1">
    <property type="nucleotide sequence ID" value="NC_010609.1"/>
</dbReference>
<dbReference type="SMR" id="B2G6E8"/>
<dbReference type="KEGG" id="lrf:LAR_0514"/>
<dbReference type="HOGENOM" id="CLU_055599_1_0_9"/>
<dbReference type="GO" id="GO:0005737">
    <property type="term" value="C:cytoplasm"/>
    <property type="evidence" value="ECO:0007669"/>
    <property type="project" value="UniProtKB-SubCell"/>
</dbReference>
<dbReference type="GO" id="GO:0048476">
    <property type="term" value="C:Holliday junction resolvase complex"/>
    <property type="evidence" value="ECO:0007669"/>
    <property type="project" value="UniProtKB-UniRule"/>
</dbReference>
<dbReference type="GO" id="GO:0005524">
    <property type="term" value="F:ATP binding"/>
    <property type="evidence" value="ECO:0007669"/>
    <property type="project" value="UniProtKB-UniRule"/>
</dbReference>
<dbReference type="GO" id="GO:0016887">
    <property type="term" value="F:ATP hydrolysis activity"/>
    <property type="evidence" value="ECO:0007669"/>
    <property type="project" value="InterPro"/>
</dbReference>
<dbReference type="GO" id="GO:0000400">
    <property type="term" value="F:four-way junction DNA binding"/>
    <property type="evidence" value="ECO:0007669"/>
    <property type="project" value="UniProtKB-UniRule"/>
</dbReference>
<dbReference type="GO" id="GO:0009378">
    <property type="term" value="F:four-way junction helicase activity"/>
    <property type="evidence" value="ECO:0007669"/>
    <property type="project" value="InterPro"/>
</dbReference>
<dbReference type="GO" id="GO:0006310">
    <property type="term" value="P:DNA recombination"/>
    <property type="evidence" value="ECO:0007669"/>
    <property type="project" value="UniProtKB-UniRule"/>
</dbReference>
<dbReference type="GO" id="GO:0006281">
    <property type="term" value="P:DNA repair"/>
    <property type="evidence" value="ECO:0007669"/>
    <property type="project" value="UniProtKB-UniRule"/>
</dbReference>
<dbReference type="CDD" id="cd00009">
    <property type="entry name" value="AAA"/>
    <property type="match status" value="1"/>
</dbReference>
<dbReference type="Gene3D" id="1.10.8.60">
    <property type="match status" value="1"/>
</dbReference>
<dbReference type="Gene3D" id="3.40.50.300">
    <property type="entry name" value="P-loop containing nucleotide triphosphate hydrolases"/>
    <property type="match status" value="1"/>
</dbReference>
<dbReference type="Gene3D" id="1.10.10.10">
    <property type="entry name" value="Winged helix-like DNA-binding domain superfamily/Winged helix DNA-binding domain"/>
    <property type="match status" value="1"/>
</dbReference>
<dbReference type="HAMAP" id="MF_00016">
    <property type="entry name" value="DNA_HJ_migration_RuvB"/>
    <property type="match status" value="1"/>
</dbReference>
<dbReference type="InterPro" id="IPR003593">
    <property type="entry name" value="AAA+_ATPase"/>
</dbReference>
<dbReference type="InterPro" id="IPR041445">
    <property type="entry name" value="AAA_lid_4"/>
</dbReference>
<dbReference type="InterPro" id="IPR004605">
    <property type="entry name" value="DNA_helicase_Holl-junc_RuvB"/>
</dbReference>
<dbReference type="InterPro" id="IPR027417">
    <property type="entry name" value="P-loop_NTPase"/>
</dbReference>
<dbReference type="InterPro" id="IPR008824">
    <property type="entry name" value="RuvB-like_N"/>
</dbReference>
<dbReference type="InterPro" id="IPR008823">
    <property type="entry name" value="RuvB_C"/>
</dbReference>
<dbReference type="InterPro" id="IPR036388">
    <property type="entry name" value="WH-like_DNA-bd_sf"/>
</dbReference>
<dbReference type="InterPro" id="IPR036390">
    <property type="entry name" value="WH_DNA-bd_sf"/>
</dbReference>
<dbReference type="NCBIfam" id="NF000868">
    <property type="entry name" value="PRK00080.1"/>
    <property type="match status" value="1"/>
</dbReference>
<dbReference type="NCBIfam" id="TIGR00635">
    <property type="entry name" value="ruvB"/>
    <property type="match status" value="1"/>
</dbReference>
<dbReference type="PANTHER" id="PTHR42848">
    <property type="match status" value="1"/>
</dbReference>
<dbReference type="PANTHER" id="PTHR42848:SF1">
    <property type="entry name" value="HOLLIDAY JUNCTION BRANCH MIGRATION COMPLEX SUBUNIT RUVB"/>
    <property type="match status" value="1"/>
</dbReference>
<dbReference type="Pfam" id="PF17864">
    <property type="entry name" value="AAA_lid_4"/>
    <property type="match status" value="1"/>
</dbReference>
<dbReference type="Pfam" id="PF05491">
    <property type="entry name" value="RuvB_C"/>
    <property type="match status" value="1"/>
</dbReference>
<dbReference type="Pfam" id="PF05496">
    <property type="entry name" value="RuvB_N"/>
    <property type="match status" value="1"/>
</dbReference>
<dbReference type="SMART" id="SM00382">
    <property type="entry name" value="AAA"/>
    <property type="match status" value="1"/>
</dbReference>
<dbReference type="SUPFAM" id="SSF52540">
    <property type="entry name" value="P-loop containing nucleoside triphosphate hydrolases"/>
    <property type="match status" value="1"/>
</dbReference>
<dbReference type="SUPFAM" id="SSF46785">
    <property type="entry name" value="Winged helix' DNA-binding domain"/>
    <property type="match status" value="1"/>
</dbReference>
<organism>
    <name type="scientific">Limosilactobacillus reuteri subsp. reuteri (strain JCM 1112)</name>
    <name type="common">Lactobacillus reuteri</name>
    <dbReference type="NCBI Taxonomy" id="557433"/>
    <lineage>
        <taxon>Bacteria</taxon>
        <taxon>Bacillati</taxon>
        <taxon>Bacillota</taxon>
        <taxon>Bacilli</taxon>
        <taxon>Lactobacillales</taxon>
        <taxon>Lactobacillaceae</taxon>
        <taxon>Limosilactobacillus</taxon>
    </lineage>
</organism>
<sequence length="338" mass="37846">MENDHGILSDHPSGEEESQVEITLRPQKLREYIGQPKIKHELEVYIKAAQSREEALDHVLLYGPPGLGKTTLAMVIANEMGVNIRTTSGPAIEKPGDLVALLNELKPGDVLFVDEIHRLPKVVEEMLYSAMEDYYIDIVIGEGPTAHPVHFPLPPFTLIGATTRAGMLSAPLRDRFGIVEHMNYYTQDELTKIIFRSAKIFHTSIQDEGAHELSLRSRGTPRIANRLLKRVRDFAQVAGKQSIDSAIVKQALSLLQVDDRGLDEIDRKMLLTMINFYHGGPVGLKTIAANIGEETNTIEEMYEPYLLQIGFISRTPRGRLVTPTAYEHLGIEYPTDKN</sequence>
<feature type="chain" id="PRO_1000089655" description="Holliday junction branch migration complex subunit RuvB">
    <location>
        <begin position="1"/>
        <end position="338"/>
    </location>
</feature>
<feature type="region of interest" description="Disordered" evidence="2">
    <location>
        <begin position="1"/>
        <end position="21"/>
    </location>
</feature>
<feature type="region of interest" description="Large ATPase domain (RuvB-L)" evidence="1">
    <location>
        <begin position="3"/>
        <end position="185"/>
    </location>
</feature>
<feature type="region of interest" description="Small ATPAse domain (RuvB-S)" evidence="1">
    <location>
        <begin position="186"/>
        <end position="256"/>
    </location>
</feature>
<feature type="region of interest" description="Head domain (RuvB-H)" evidence="1">
    <location>
        <begin position="259"/>
        <end position="338"/>
    </location>
</feature>
<feature type="compositionally biased region" description="Basic and acidic residues" evidence="2">
    <location>
        <begin position="1"/>
        <end position="14"/>
    </location>
</feature>
<feature type="binding site" evidence="1">
    <location>
        <position position="24"/>
    </location>
    <ligand>
        <name>ATP</name>
        <dbReference type="ChEBI" id="CHEBI:30616"/>
    </ligand>
</feature>
<feature type="binding site" evidence="1">
    <location>
        <position position="25"/>
    </location>
    <ligand>
        <name>ATP</name>
        <dbReference type="ChEBI" id="CHEBI:30616"/>
    </ligand>
</feature>
<feature type="binding site" evidence="1">
    <location>
        <position position="66"/>
    </location>
    <ligand>
        <name>ATP</name>
        <dbReference type="ChEBI" id="CHEBI:30616"/>
    </ligand>
</feature>
<feature type="binding site" evidence="1">
    <location>
        <position position="69"/>
    </location>
    <ligand>
        <name>ATP</name>
        <dbReference type="ChEBI" id="CHEBI:30616"/>
    </ligand>
</feature>
<feature type="binding site" evidence="1">
    <location>
        <position position="70"/>
    </location>
    <ligand>
        <name>ATP</name>
        <dbReference type="ChEBI" id="CHEBI:30616"/>
    </ligand>
</feature>
<feature type="binding site" evidence="1">
    <location>
        <position position="70"/>
    </location>
    <ligand>
        <name>Mg(2+)</name>
        <dbReference type="ChEBI" id="CHEBI:18420"/>
    </ligand>
</feature>
<feature type="binding site" evidence="1">
    <location>
        <position position="71"/>
    </location>
    <ligand>
        <name>ATP</name>
        <dbReference type="ChEBI" id="CHEBI:30616"/>
    </ligand>
</feature>
<feature type="binding site" evidence="1">
    <location>
        <begin position="132"/>
        <end position="134"/>
    </location>
    <ligand>
        <name>ATP</name>
        <dbReference type="ChEBI" id="CHEBI:30616"/>
    </ligand>
</feature>
<feature type="binding site" evidence="1">
    <location>
        <position position="175"/>
    </location>
    <ligand>
        <name>ATP</name>
        <dbReference type="ChEBI" id="CHEBI:30616"/>
    </ligand>
</feature>
<feature type="binding site" evidence="1">
    <location>
        <position position="185"/>
    </location>
    <ligand>
        <name>ATP</name>
        <dbReference type="ChEBI" id="CHEBI:30616"/>
    </ligand>
</feature>
<feature type="binding site" evidence="1">
    <location>
        <position position="222"/>
    </location>
    <ligand>
        <name>ATP</name>
        <dbReference type="ChEBI" id="CHEBI:30616"/>
    </ligand>
</feature>
<feature type="binding site" evidence="1">
    <location>
        <position position="314"/>
    </location>
    <ligand>
        <name>DNA</name>
        <dbReference type="ChEBI" id="CHEBI:16991"/>
    </ligand>
</feature>
<feature type="binding site" evidence="1">
    <location>
        <position position="319"/>
    </location>
    <ligand>
        <name>DNA</name>
        <dbReference type="ChEBI" id="CHEBI:16991"/>
    </ligand>
</feature>
<proteinExistence type="inferred from homology"/>
<evidence type="ECO:0000255" key="1">
    <source>
        <dbReference type="HAMAP-Rule" id="MF_00016"/>
    </source>
</evidence>
<evidence type="ECO:0000256" key="2">
    <source>
        <dbReference type="SAM" id="MobiDB-lite"/>
    </source>
</evidence>
<accession>B2G6E8</accession>
<name>RUVB_LIMRJ</name>